<organism>
    <name type="scientific">Gemmatimonas aurantiaca (strain DSM 14586 / JCM 11422 / NBRC 100505 / T-27)</name>
    <dbReference type="NCBI Taxonomy" id="379066"/>
    <lineage>
        <taxon>Bacteria</taxon>
        <taxon>Pseudomonadati</taxon>
        <taxon>Gemmatimonadota</taxon>
        <taxon>Gemmatimonadia</taxon>
        <taxon>Gemmatimonadales</taxon>
        <taxon>Gemmatimonadaceae</taxon>
        <taxon>Gemmatimonas</taxon>
    </lineage>
</organism>
<comment type="function">
    <text evidence="1">One of several proteins that assist in the late maturation steps of the functional core of the 30S ribosomal subunit. Helps release RbfA from mature subunits. May play a role in the assembly of ribosomal proteins into the subunit. Circularly permuted GTPase that catalyzes slow GTP hydrolysis, GTPase activity is stimulated by the 30S ribosomal subunit.</text>
</comment>
<comment type="cofactor">
    <cofactor evidence="1">
        <name>Zn(2+)</name>
        <dbReference type="ChEBI" id="CHEBI:29105"/>
    </cofactor>
    <text evidence="1">Binds 1 zinc ion per subunit.</text>
</comment>
<comment type="subunit">
    <text evidence="1">Monomer. Associates with 30S ribosomal subunit, binds 16S rRNA.</text>
</comment>
<comment type="subcellular location">
    <subcellularLocation>
        <location evidence="1">Cytoplasm</location>
    </subcellularLocation>
</comment>
<comment type="similarity">
    <text evidence="1">Belongs to the TRAFAC class YlqF/YawG GTPase family. RsgA subfamily.</text>
</comment>
<accession>C1ABL6</accession>
<name>RSGA_GEMAT</name>
<dbReference type="EC" id="3.6.1.-" evidence="1"/>
<dbReference type="EMBL" id="AP009153">
    <property type="protein sequence ID" value="BAH39893.1"/>
    <property type="molecule type" value="Genomic_DNA"/>
</dbReference>
<dbReference type="RefSeq" id="WP_015894662.1">
    <property type="nucleotide sequence ID" value="NC_012489.1"/>
</dbReference>
<dbReference type="SMR" id="C1ABL6"/>
<dbReference type="STRING" id="379066.GAU_2851"/>
<dbReference type="KEGG" id="gau:GAU_2851"/>
<dbReference type="eggNOG" id="COG1162">
    <property type="taxonomic scope" value="Bacteria"/>
</dbReference>
<dbReference type="HOGENOM" id="CLU_033617_2_0_0"/>
<dbReference type="OrthoDB" id="9809485at2"/>
<dbReference type="Proteomes" id="UP000002209">
    <property type="component" value="Chromosome"/>
</dbReference>
<dbReference type="GO" id="GO:0005737">
    <property type="term" value="C:cytoplasm"/>
    <property type="evidence" value="ECO:0007669"/>
    <property type="project" value="UniProtKB-SubCell"/>
</dbReference>
<dbReference type="GO" id="GO:0005525">
    <property type="term" value="F:GTP binding"/>
    <property type="evidence" value="ECO:0007669"/>
    <property type="project" value="UniProtKB-UniRule"/>
</dbReference>
<dbReference type="GO" id="GO:0003924">
    <property type="term" value="F:GTPase activity"/>
    <property type="evidence" value="ECO:0007669"/>
    <property type="project" value="UniProtKB-UniRule"/>
</dbReference>
<dbReference type="GO" id="GO:0046872">
    <property type="term" value="F:metal ion binding"/>
    <property type="evidence" value="ECO:0007669"/>
    <property type="project" value="UniProtKB-KW"/>
</dbReference>
<dbReference type="GO" id="GO:0019843">
    <property type="term" value="F:rRNA binding"/>
    <property type="evidence" value="ECO:0007669"/>
    <property type="project" value="UniProtKB-KW"/>
</dbReference>
<dbReference type="GO" id="GO:0042274">
    <property type="term" value="P:ribosomal small subunit biogenesis"/>
    <property type="evidence" value="ECO:0007669"/>
    <property type="project" value="UniProtKB-UniRule"/>
</dbReference>
<dbReference type="CDD" id="cd01854">
    <property type="entry name" value="YjeQ_EngC"/>
    <property type="match status" value="1"/>
</dbReference>
<dbReference type="Gene3D" id="2.40.50.140">
    <property type="entry name" value="Nucleic acid-binding proteins"/>
    <property type="match status" value="1"/>
</dbReference>
<dbReference type="Gene3D" id="3.40.50.300">
    <property type="entry name" value="P-loop containing nucleotide triphosphate hydrolases"/>
    <property type="match status" value="1"/>
</dbReference>
<dbReference type="Gene3D" id="1.10.40.50">
    <property type="entry name" value="Probable gtpase engc, domain 3"/>
    <property type="match status" value="1"/>
</dbReference>
<dbReference type="HAMAP" id="MF_01820">
    <property type="entry name" value="GTPase_RsgA"/>
    <property type="match status" value="1"/>
</dbReference>
<dbReference type="InterPro" id="IPR030378">
    <property type="entry name" value="G_CP_dom"/>
</dbReference>
<dbReference type="InterPro" id="IPR012340">
    <property type="entry name" value="NA-bd_OB-fold"/>
</dbReference>
<dbReference type="InterPro" id="IPR027417">
    <property type="entry name" value="P-loop_NTPase"/>
</dbReference>
<dbReference type="InterPro" id="IPR004881">
    <property type="entry name" value="Ribosome_biogen_GTPase_RsgA"/>
</dbReference>
<dbReference type="InterPro" id="IPR010914">
    <property type="entry name" value="RsgA_GTPase_dom"/>
</dbReference>
<dbReference type="NCBIfam" id="TIGR00157">
    <property type="entry name" value="ribosome small subunit-dependent GTPase A"/>
    <property type="match status" value="1"/>
</dbReference>
<dbReference type="PANTHER" id="PTHR32120">
    <property type="entry name" value="SMALL RIBOSOMAL SUBUNIT BIOGENESIS GTPASE RSGA"/>
    <property type="match status" value="1"/>
</dbReference>
<dbReference type="PANTHER" id="PTHR32120:SF11">
    <property type="entry name" value="SMALL RIBOSOMAL SUBUNIT BIOGENESIS GTPASE RSGA 1, MITOCHONDRIAL-RELATED"/>
    <property type="match status" value="1"/>
</dbReference>
<dbReference type="Pfam" id="PF03193">
    <property type="entry name" value="RsgA_GTPase"/>
    <property type="match status" value="1"/>
</dbReference>
<dbReference type="SUPFAM" id="SSF50249">
    <property type="entry name" value="Nucleic acid-binding proteins"/>
    <property type="match status" value="1"/>
</dbReference>
<dbReference type="SUPFAM" id="SSF52540">
    <property type="entry name" value="P-loop containing nucleoside triphosphate hydrolases"/>
    <property type="match status" value="1"/>
</dbReference>
<dbReference type="PROSITE" id="PS50936">
    <property type="entry name" value="ENGC_GTPASE"/>
    <property type="match status" value="1"/>
</dbReference>
<dbReference type="PROSITE" id="PS51721">
    <property type="entry name" value="G_CP"/>
    <property type="match status" value="1"/>
</dbReference>
<evidence type="ECO:0000255" key="1">
    <source>
        <dbReference type="HAMAP-Rule" id="MF_01820"/>
    </source>
</evidence>
<evidence type="ECO:0000255" key="2">
    <source>
        <dbReference type="PROSITE-ProRule" id="PRU01058"/>
    </source>
</evidence>
<gene>
    <name evidence="1" type="primary">rsgA</name>
    <name type="ordered locus">GAU_2851</name>
</gene>
<reference key="1">
    <citation type="submission" date="2006-03" db="EMBL/GenBank/DDBJ databases">
        <title>Complete genome sequence of Gemmatimonas aurantiaca T-27 that represents a novel phylum Gemmatimonadetes.</title>
        <authorList>
            <person name="Takasaki K."/>
            <person name="Ichikawa N."/>
            <person name="Miura H."/>
            <person name="Matsushita S."/>
            <person name="Watanabe Y."/>
            <person name="Oguchi A."/>
            <person name="Ankai A."/>
            <person name="Yashiro I."/>
            <person name="Takahashi M."/>
            <person name="Terui Y."/>
            <person name="Fukui S."/>
            <person name="Yokoyama H."/>
            <person name="Tanikawa S."/>
            <person name="Hanada S."/>
            <person name="Kamagata Y."/>
            <person name="Fujita N."/>
        </authorList>
    </citation>
    <scope>NUCLEOTIDE SEQUENCE [LARGE SCALE GENOMIC DNA]</scope>
    <source>
        <strain>DSM 14586 / JCM 11422 / NBRC 100505 / T-27</strain>
    </source>
</reference>
<sequence>MTTSTTGVVVQGTGGVWEVYTEQGERFSASMRGRLKHEAHGALKLAVGDRVTIARDAQHAETWAITDIHPRTSKLARRMPGGRYGERIVVANLDQVLVVFAAARPDPHPRMLDRFLVIAEANGLSARIVINKADLVSPEVSAALFADQMAAGYPVHHTSIHTGEGLEALRDEVEHRSSALSGPSGVGKSSLMNALFPGLDLRTAAVSDAVNKGRHTTVGAMLHPLPHGGFIADTPGLREVGLWGIEAGQVASCFPEFRPLLSACRFADCIHTVEPGCAVREAVEAGDVSPGRYESYVKLRDELMGRS</sequence>
<proteinExistence type="inferred from homology"/>
<feature type="chain" id="PRO_1000216041" description="Small ribosomal subunit biogenesis GTPase RsgA">
    <location>
        <begin position="1"/>
        <end position="307"/>
    </location>
</feature>
<feature type="domain" description="CP-type G" evidence="2">
    <location>
        <begin position="82"/>
        <end position="240"/>
    </location>
</feature>
<feature type="binding site" evidence="1">
    <location>
        <begin position="131"/>
        <end position="134"/>
    </location>
    <ligand>
        <name>GTP</name>
        <dbReference type="ChEBI" id="CHEBI:37565"/>
    </ligand>
</feature>
<feature type="binding site" evidence="1">
    <location>
        <begin position="182"/>
        <end position="190"/>
    </location>
    <ligand>
        <name>GTP</name>
        <dbReference type="ChEBI" id="CHEBI:37565"/>
    </ligand>
</feature>
<feature type="binding site" evidence="1">
    <location>
        <position position="264"/>
    </location>
    <ligand>
        <name>Zn(2+)</name>
        <dbReference type="ChEBI" id="CHEBI:29105"/>
    </ligand>
</feature>
<feature type="binding site" evidence="1">
    <location>
        <position position="269"/>
    </location>
    <ligand>
        <name>Zn(2+)</name>
        <dbReference type="ChEBI" id="CHEBI:29105"/>
    </ligand>
</feature>
<feature type="binding site" evidence="1">
    <location>
        <position position="271"/>
    </location>
    <ligand>
        <name>Zn(2+)</name>
        <dbReference type="ChEBI" id="CHEBI:29105"/>
    </ligand>
</feature>
<feature type="binding site" evidence="1">
    <location>
        <position position="277"/>
    </location>
    <ligand>
        <name>Zn(2+)</name>
        <dbReference type="ChEBI" id="CHEBI:29105"/>
    </ligand>
</feature>
<protein>
    <recommendedName>
        <fullName evidence="1">Small ribosomal subunit biogenesis GTPase RsgA</fullName>
        <ecNumber evidence="1">3.6.1.-</ecNumber>
    </recommendedName>
</protein>
<keyword id="KW-0963">Cytoplasm</keyword>
<keyword id="KW-0342">GTP-binding</keyword>
<keyword id="KW-0378">Hydrolase</keyword>
<keyword id="KW-0479">Metal-binding</keyword>
<keyword id="KW-0547">Nucleotide-binding</keyword>
<keyword id="KW-1185">Reference proteome</keyword>
<keyword id="KW-0690">Ribosome biogenesis</keyword>
<keyword id="KW-0694">RNA-binding</keyword>
<keyword id="KW-0699">rRNA-binding</keyword>
<keyword id="KW-0862">Zinc</keyword>